<feature type="chain" id="PRO_0000367094" description="Actin, cytoplasmic 1">
    <location>
        <begin position="1"/>
        <end position="375"/>
    </location>
</feature>
<feature type="initiator methionine" description="Removed; alternate" evidence="2">
    <location>
        <position position="1"/>
    </location>
</feature>
<feature type="chain" id="PRO_0000000809" description="Actin, cytoplasmic 1, N-terminally processed">
    <location>
        <begin position="2"/>
        <end position="375"/>
    </location>
</feature>
<feature type="modified residue" description="N-acetylmethionine; in Actin, cytoplasmic 1; alternate" evidence="2">
    <location>
        <position position="1"/>
    </location>
</feature>
<feature type="modified residue" description="N-acetylglutamate; in Actin, cytoplasmic 1, N-terminally processed" evidence="2">
    <location>
        <position position="2"/>
    </location>
</feature>
<feature type="modified residue" description="Methionine (R)-sulfoxide" evidence="4">
    <location>
        <position position="44"/>
    </location>
</feature>
<feature type="modified residue" description="Methionine (R)-sulfoxide" evidence="4">
    <location>
        <position position="47"/>
    </location>
</feature>
<feature type="modified residue" description="Tele-methylhistidine" evidence="4">
    <location>
        <position position="73"/>
    </location>
</feature>
<keyword id="KW-0007">Acetylation</keyword>
<keyword id="KW-0067">ATP-binding</keyword>
<keyword id="KW-0963">Cytoplasm</keyword>
<keyword id="KW-0206">Cytoskeleton</keyword>
<keyword id="KW-0378">Hydrolase</keyword>
<keyword id="KW-0488">Methylation</keyword>
<keyword id="KW-0547">Nucleotide-binding</keyword>
<keyword id="KW-0539">Nucleus</keyword>
<keyword id="KW-0558">Oxidation</keyword>
<keyword id="KW-1185">Reference proteome</keyword>
<gene>
    <name type="primary">actba</name>
</gene>
<name>ACTB1_TAKRU</name>
<organism>
    <name type="scientific">Takifugu rubripes</name>
    <name type="common">Japanese pufferfish</name>
    <name type="synonym">Fugu rubripes</name>
    <dbReference type="NCBI Taxonomy" id="31033"/>
    <lineage>
        <taxon>Eukaryota</taxon>
        <taxon>Metazoa</taxon>
        <taxon>Chordata</taxon>
        <taxon>Craniata</taxon>
        <taxon>Vertebrata</taxon>
        <taxon>Euteleostomi</taxon>
        <taxon>Actinopterygii</taxon>
        <taxon>Neopterygii</taxon>
        <taxon>Teleostei</taxon>
        <taxon>Neoteleostei</taxon>
        <taxon>Acanthomorphata</taxon>
        <taxon>Eupercaria</taxon>
        <taxon>Tetraodontiformes</taxon>
        <taxon>Tetradontoidea</taxon>
        <taxon>Tetraodontidae</taxon>
        <taxon>Takifugu</taxon>
    </lineage>
</organism>
<evidence type="ECO:0000250" key="1">
    <source>
        <dbReference type="UniProtKB" id="O93400"/>
    </source>
</evidence>
<evidence type="ECO:0000250" key="2">
    <source>
        <dbReference type="UniProtKB" id="P60706"/>
    </source>
</evidence>
<evidence type="ECO:0000250" key="3">
    <source>
        <dbReference type="UniProtKB" id="P60709"/>
    </source>
</evidence>
<evidence type="ECO:0000250" key="4">
    <source>
        <dbReference type="UniProtKB" id="P60710"/>
    </source>
</evidence>
<evidence type="ECO:0000250" key="5">
    <source>
        <dbReference type="UniProtKB" id="P68137"/>
    </source>
</evidence>
<evidence type="ECO:0000269" key="6">
    <source>
    </source>
</evidence>
<evidence type="ECO:0000305" key="7"/>
<reference key="1">
    <citation type="journal article" date="1996" name="J. Mol. Biol.">
        <title>Isolation, characterization and evolution of nine pufferfish (Fugu rubripes) actin genes.</title>
        <authorList>
            <person name="Venkatesh B."/>
            <person name="Tay B.H."/>
            <person name="Elgar G."/>
            <person name="Brenner S."/>
        </authorList>
    </citation>
    <scope>NUCLEOTIDE SEQUENCE [GENOMIC DNA]</scope>
    <scope>TISSUE SPECIFICITY</scope>
</reference>
<dbReference type="EC" id="3.6.4.-" evidence="5"/>
<dbReference type="EMBL" id="U37499">
    <property type="protein sequence ID" value="AAC59889.1"/>
    <property type="molecule type" value="Genomic_DNA"/>
</dbReference>
<dbReference type="PIR" id="S71124">
    <property type="entry name" value="S71124"/>
</dbReference>
<dbReference type="SMR" id="P68142"/>
<dbReference type="GeneID" id="101073736"/>
<dbReference type="KEGG" id="tru:101073736"/>
<dbReference type="CTD" id="57935"/>
<dbReference type="eggNOG" id="KOG0676">
    <property type="taxonomic scope" value="Eukaryota"/>
</dbReference>
<dbReference type="HOGENOM" id="CLU_027965_0_2_1"/>
<dbReference type="InParanoid" id="P68142"/>
<dbReference type="OrthoDB" id="6953074at2759"/>
<dbReference type="TreeFam" id="TF354237"/>
<dbReference type="Proteomes" id="UP000005226">
    <property type="component" value="Unplaced"/>
</dbReference>
<dbReference type="GO" id="GO:0015629">
    <property type="term" value="C:actin cytoskeleton"/>
    <property type="evidence" value="ECO:0000250"/>
    <property type="project" value="UniProtKB"/>
</dbReference>
<dbReference type="GO" id="GO:0005856">
    <property type="term" value="C:cytoskeleton"/>
    <property type="evidence" value="ECO:0000250"/>
    <property type="project" value="AgBase"/>
</dbReference>
<dbReference type="GO" id="GO:0097433">
    <property type="term" value="C:dense body"/>
    <property type="evidence" value="ECO:0000250"/>
    <property type="project" value="AgBase"/>
</dbReference>
<dbReference type="GO" id="GO:0005925">
    <property type="term" value="C:focal adhesion"/>
    <property type="evidence" value="ECO:0000250"/>
    <property type="project" value="AgBase"/>
</dbReference>
<dbReference type="GO" id="GO:0005634">
    <property type="term" value="C:nucleus"/>
    <property type="evidence" value="ECO:0000250"/>
    <property type="project" value="UniProtKB"/>
</dbReference>
<dbReference type="GO" id="GO:0005886">
    <property type="term" value="C:plasma membrane"/>
    <property type="evidence" value="ECO:0000250"/>
    <property type="project" value="AgBase"/>
</dbReference>
<dbReference type="GO" id="GO:0005524">
    <property type="term" value="F:ATP binding"/>
    <property type="evidence" value="ECO:0007669"/>
    <property type="project" value="UniProtKB-KW"/>
</dbReference>
<dbReference type="GO" id="GO:0016787">
    <property type="term" value="F:hydrolase activity"/>
    <property type="evidence" value="ECO:0007669"/>
    <property type="project" value="UniProtKB-KW"/>
</dbReference>
<dbReference type="CDD" id="cd10224">
    <property type="entry name" value="ASKHA_NBD_actin"/>
    <property type="match status" value="1"/>
</dbReference>
<dbReference type="FunFam" id="3.30.420.40:FF:000131">
    <property type="entry name" value="Actin, alpha skeletal muscle"/>
    <property type="match status" value="1"/>
</dbReference>
<dbReference type="FunFam" id="3.30.420.40:FF:000291">
    <property type="entry name" value="Actin, alpha skeletal muscle"/>
    <property type="match status" value="1"/>
</dbReference>
<dbReference type="FunFam" id="3.90.640.10:FF:000047">
    <property type="entry name" value="Actin, alpha skeletal muscle"/>
    <property type="match status" value="1"/>
</dbReference>
<dbReference type="FunFam" id="3.30.420.40:FF:000058">
    <property type="entry name" value="Putative actin-related protein 5"/>
    <property type="match status" value="1"/>
</dbReference>
<dbReference type="Gene3D" id="3.30.420.40">
    <property type="match status" value="2"/>
</dbReference>
<dbReference type="Gene3D" id="3.90.640.10">
    <property type="entry name" value="Actin, Chain A, domain 4"/>
    <property type="match status" value="1"/>
</dbReference>
<dbReference type="InterPro" id="IPR004000">
    <property type="entry name" value="Actin"/>
</dbReference>
<dbReference type="InterPro" id="IPR020902">
    <property type="entry name" value="Actin/actin-like_CS"/>
</dbReference>
<dbReference type="InterPro" id="IPR004001">
    <property type="entry name" value="Actin_CS"/>
</dbReference>
<dbReference type="InterPro" id="IPR043129">
    <property type="entry name" value="ATPase_NBD"/>
</dbReference>
<dbReference type="PANTHER" id="PTHR11937">
    <property type="entry name" value="ACTIN"/>
    <property type="match status" value="1"/>
</dbReference>
<dbReference type="Pfam" id="PF00022">
    <property type="entry name" value="Actin"/>
    <property type="match status" value="1"/>
</dbReference>
<dbReference type="PRINTS" id="PR00190">
    <property type="entry name" value="ACTIN"/>
</dbReference>
<dbReference type="SMART" id="SM00268">
    <property type="entry name" value="ACTIN"/>
    <property type="match status" value="1"/>
</dbReference>
<dbReference type="SUPFAM" id="SSF53067">
    <property type="entry name" value="Actin-like ATPase domain"/>
    <property type="match status" value="2"/>
</dbReference>
<dbReference type="PROSITE" id="PS00406">
    <property type="entry name" value="ACTINS_1"/>
    <property type="match status" value="1"/>
</dbReference>
<dbReference type="PROSITE" id="PS00432">
    <property type="entry name" value="ACTINS_2"/>
    <property type="match status" value="1"/>
</dbReference>
<dbReference type="PROSITE" id="PS01132">
    <property type="entry name" value="ACTINS_ACT_LIKE"/>
    <property type="match status" value="1"/>
</dbReference>
<comment type="function">
    <text evidence="3">Actin is a highly conserved protein that polymerizes to produce filaments that form cross-linked networks in the cytoplasm of cells. Actin exists in both monomeric (G-actin) and polymeric (F-actin) forms, both forms playing key functions, such as cell motility and contraction. In addition to their role in the cytoplasmic cytoskeleton, G- and F-actin also localize in the nucleus, and regulate gene transcription and motility and repair of damaged DNA.</text>
</comment>
<comment type="catalytic activity">
    <reaction evidence="5">
        <text>ATP + H2O = ADP + phosphate + H(+)</text>
        <dbReference type="Rhea" id="RHEA:13065"/>
        <dbReference type="ChEBI" id="CHEBI:15377"/>
        <dbReference type="ChEBI" id="CHEBI:15378"/>
        <dbReference type="ChEBI" id="CHEBI:30616"/>
        <dbReference type="ChEBI" id="CHEBI:43474"/>
        <dbReference type="ChEBI" id="CHEBI:456216"/>
    </reaction>
</comment>
<comment type="subunit">
    <text evidence="3 4">Polymerization of globular actin (G-actin) leads to a structural filament (F-actin) in the form of a two-stranded helix (By similarity). Each actin can bind to 4 others (By similarity).</text>
</comment>
<comment type="subcellular location">
    <subcellularLocation>
        <location evidence="4">Cytoplasm</location>
        <location evidence="4">Cytoskeleton</location>
    </subcellularLocation>
    <subcellularLocation>
        <location evidence="1">Nucleus</location>
    </subcellularLocation>
</comment>
<comment type="tissue specificity">
    <text evidence="6">Widely distributed. Not expressed in skeletal muscle.</text>
</comment>
<comment type="PTM">
    <molecule>Actin, cytoplasmic 1</molecule>
    <text evidence="3">N-terminal cleavage of acetylated methionine of immature cytoplasmic actin by ACTMAP.</text>
</comment>
<comment type="PTM">
    <text evidence="4">Oxidation of Met-44 and Met-47 by MICALs (mical1, mical2 or mical3) to form methionine sulfoxide promotes actin filament depolymerization. Mical1 and mical2 produce the (R)-S-oxide form. The (R)-S-oxide form is reverted by msrb1 and msrb2, which promote actin repolymerization.</text>
</comment>
<comment type="PTM">
    <text evidence="2">Methylation at His-73 by SETD3. Methylation stabilizes actin filaments.</text>
</comment>
<comment type="miscellaneous">
    <text evidence="7">There are three different beta-cytoplasmic actins in Fugu rubripes.</text>
</comment>
<comment type="miscellaneous">
    <text evidence="1">In vertebrates 3 main groups of actin isoforms, alpha, beta and gamma have been identified. The alpha actins are found in muscle tissues and are a major constituent of the contractile apparatus. The beta and gamma actins coexist in most cell types as components of the cytoskeleton and as mediators of internal cell motility.</text>
</comment>
<comment type="similarity">
    <text evidence="7">Belongs to the actin family.</text>
</comment>
<accession>P68142</accession>
<accession>P53484</accession>
<sequence>MEDEIAALVVDNGSGMCKAGFAGDDAPRAVFPSIVGRPRHQGVMVGMGQKDSYVGDEAQSKRGILTLKYPIEHGIVTNWDDMEKIWHHTFYNELRVAPEEHPVLLTEAPLNPKANREKMTQIMFETFNTPAMYVAIQAVLSLYASGRTTGIVMDSGDGVTHTVPIYEGYALPHAILRLDLAGRDLTDYLMKILTERGYSFTTTAEREIVRDIKEKLCYVALDFEQEMGTAASSSSLEKSYELPDGQVITIGNERFRCPEALFQPSFLGMESCGIHETTYNSIMKCDVDIRKDLYANTVLSGGTTMYPGIADRMQKEITALAPSTMKIKIIAPPERKYSVWIGGSILASLSTFQQMWISKQEYDESGPSIVHRKCF</sequence>
<protein>
    <recommendedName>
        <fullName>Actin, cytoplasmic 1</fullName>
        <ecNumber evidence="5">3.6.4.-</ecNumber>
    </recommendedName>
    <alternativeName>
        <fullName>Beta-actin A</fullName>
    </alternativeName>
    <component>
        <recommendedName>
            <fullName>Actin, cytoplasmic 1, N-terminally processed</fullName>
        </recommendedName>
    </component>
</protein>
<proteinExistence type="evidence at transcript level"/>